<accession>B4TN59</accession>
<keyword id="KW-0030">Aminoacyl-tRNA synthetase</keyword>
<keyword id="KW-0067">ATP-binding</keyword>
<keyword id="KW-0963">Cytoplasm</keyword>
<keyword id="KW-0436">Ligase</keyword>
<keyword id="KW-0479">Metal-binding</keyword>
<keyword id="KW-0547">Nucleotide-binding</keyword>
<keyword id="KW-0648">Protein biosynthesis</keyword>
<keyword id="KW-0862">Zinc</keyword>
<protein>
    <recommendedName>
        <fullName evidence="1">Cysteine--tRNA ligase</fullName>
        <ecNumber evidence="1">6.1.1.16</ecNumber>
    </recommendedName>
    <alternativeName>
        <fullName evidence="1">Cysteinyl-tRNA synthetase</fullName>
        <shortName evidence="1">CysRS</shortName>
    </alternativeName>
</protein>
<proteinExistence type="inferred from homology"/>
<organism>
    <name type="scientific">Salmonella schwarzengrund (strain CVM19633)</name>
    <dbReference type="NCBI Taxonomy" id="439843"/>
    <lineage>
        <taxon>Bacteria</taxon>
        <taxon>Pseudomonadati</taxon>
        <taxon>Pseudomonadota</taxon>
        <taxon>Gammaproteobacteria</taxon>
        <taxon>Enterobacterales</taxon>
        <taxon>Enterobacteriaceae</taxon>
        <taxon>Salmonella</taxon>
    </lineage>
</organism>
<gene>
    <name evidence="1" type="primary">cysS</name>
    <name type="ordered locus">SeSA_A0582</name>
</gene>
<sequence>MLKIFNTLTRQKEEFKPIHAGEVGMYVCGITVYDLCHIGHGRTFVAFDVVARYLRFLGYKLKYVRNITDIDDKIIKRANENGESFVALVDRMIAEMHQDFDALNILRPDSEPRATHHIQEIIELTRTLIEKGHAYVADNGDVMFDVPTDPTYGQLSRQDLEQLQAGARVDVVDVKRNPMDFVLWKMSKEGEPSWPSPWGEGRPGWHIECSAMNCKQLGNHFDIHGGGSDLMFPHHENEIAQSTCAHDGEYVNYWMHSGMVMVDREKMSKSLGNFFTVRDVLKYYDAETVRYFLMSGHYRSQLNYSEENLKQARASLERLYTALRGTDKSAAPAGGEAFEARFVEAMNDDFNTPEAYSVLFDMAREVNRLKGEDMTAANAMASHLRKISGVLGLLEQEPDVFLQSGAQADDGEVAEIEALIQQRLDARKAKDWAAADAARDRLTEMGIILEDGPQGTTWRRK</sequence>
<evidence type="ECO:0000255" key="1">
    <source>
        <dbReference type="HAMAP-Rule" id="MF_00041"/>
    </source>
</evidence>
<name>SYC_SALSV</name>
<reference key="1">
    <citation type="journal article" date="2011" name="J. Bacteriol.">
        <title>Comparative genomics of 28 Salmonella enterica isolates: evidence for CRISPR-mediated adaptive sublineage evolution.</title>
        <authorList>
            <person name="Fricke W.F."/>
            <person name="Mammel M.K."/>
            <person name="McDermott P.F."/>
            <person name="Tartera C."/>
            <person name="White D.G."/>
            <person name="Leclerc J.E."/>
            <person name="Ravel J."/>
            <person name="Cebula T.A."/>
        </authorList>
    </citation>
    <scope>NUCLEOTIDE SEQUENCE [LARGE SCALE GENOMIC DNA]</scope>
    <source>
        <strain>CVM19633</strain>
    </source>
</reference>
<dbReference type="EC" id="6.1.1.16" evidence="1"/>
<dbReference type="EMBL" id="CP001127">
    <property type="protein sequence ID" value="ACF88791.1"/>
    <property type="molecule type" value="Genomic_DNA"/>
</dbReference>
<dbReference type="RefSeq" id="WP_000912377.1">
    <property type="nucleotide sequence ID" value="NC_011094.1"/>
</dbReference>
<dbReference type="SMR" id="B4TN59"/>
<dbReference type="KEGG" id="sew:SeSA_A0582"/>
<dbReference type="HOGENOM" id="CLU_013528_0_1_6"/>
<dbReference type="Proteomes" id="UP000001865">
    <property type="component" value="Chromosome"/>
</dbReference>
<dbReference type="GO" id="GO:0005829">
    <property type="term" value="C:cytosol"/>
    <property type="evidence" value="ECO:0007669"/>
    <property type="project" value="TreeGrafter"/>
</dbReference>
<dbReference type="GO" id="GO:0005524">
    <property type="term" value="F:ATP binding"/>
    <property type="evidence" value="ECO:0007669"/>
    <property type="project" value="UniProtKB-UniRule"/>
</dbReference>
<dbReference type="GO" id="GO:0004817">
    <property type="term" value="F:cysteine-tRNA ligase activity"/>
    <property type="evidence" value="ECO:0007669"/>
    <property type="project" value="UniProtKB-UniRule"/>
</dbReference>
<dbReference type="GO" id="GO:0008270">
    <property type="term" value="F:zinc ion binding"/>
    <property type="evidence" value="ECO:0007669"/>
    <property type="project" value="UniProtKB-UniRule"/>
</dbReference>
<dbReference type="GO" id="GO:0006423">
    <property type="term" value="P:cysteinyl-tRNA aminoacylation"/>
    <property type="evidence" value="ECO:0007669"/>
    <property type="project" value="UniProtKB-UniRule"/>
</dbReference>
<dbReference type="CDD" id="cd07963">
    <property type="entry name" value="Anticodon_Ia_Cys"/>
    <property type="match status" value="1"/>
</dbReference>
<dbReference type="CDD" id="cd00672">
    <property type="entry name" value="CysRS_core"/>
    <property type="match status" value="1"/>
</dbReference>
<dbReference type="FunFam" id="1.20.120.1910:FF:000001">
    <property type="entry name" value="Cysteine--tRNA ligase"/>
    <property type="match status" value="1"/>
</dbReference>
<dbReference type="FunFam" id="3.40.50.620:FF:000009">
    <property type="entry name" value="Cysteine--tRNA ligase"/>
    <property type="match status" value="1"/>
</dbReference>
<dbReference type="Gene3D" id="1.20.120.1910">
    <property type="entry name" value="Cysteine-tRNA ligase, C-terminal anti-codon recognition domain"/>
    <property type="match status" value="1"/>
</dbReference>
<dbReference type="Gene3D" id="3.40.50.620">
    <property type="entry name" value="HUPs"/>
    <property type="match status" value="1"/>
</dbReference>
<dbReference type="HAMAP" id="MF_00041">
    <property type="entry name" value="Cys_tRNA_synth"/>
    <property type="match status" value="1"/>
</dbReference>
<dbReference type="InterPro" id="IPR015803">
    <property type="entry name" value="Cys-tRNA-ligase"/>
</dbReference>
<dbReference type="InterPro" id="IPR015273">
    <property type="entry name" value="Cys-tRNA-synt_Ia_DALR"/>
</dbReference>
<dbReference type="InterPro" id="IPR024909">
    <property type="entry name" value="Cys-tRNA/MSH_ligase"/>
</dbReference>
<dbReference type="InterPro" id="IPR056411">
    <property type="entry name" value="CysS_C"/>
</dbReference>
<dbReference type="InterPro" id="IPR014729">
    <property type="entry name" value="Rossmann-like_a/b/a_fold"/>
</dbReference>
<dbReference type="InterPro" id="IPR032678">
    <property type="entry name" value="tRNA-synt_1_cat_dom"/>
</dbReference>
<dbReference type="InterPro" id="IPR009080">
    <property type="entry name" value="tRNAsynth_Ia_anticodon-bd"/>
</dbReference>
<dbReference type="NCBIfam" id="TIGR00435">
    <property type="entry name" value="cysS"/>
    <property type="match status" value="1"/>
</dbReference>
<dbReference type="PANTHER" id="PTHR10890:SF3">
    <property type="entry name" value="CYSTEINE--TRNA LIGASE, CYTOPLASMIC"/>
    <property type="match status" value="1"/>
</dbReference>
<dbReference type="PANTHER" id="PTHR10890">
    <property type="entry name" value="CYSTEINYL-TRNA SYNTHETASE"/>
    <property type="match status" value="1"/>
</dbReference>
<dbReference type="Pfam" id="PF23493">
    <property type="entry name" value="CysS_C"/>
    <property type="match status" value="1"/>
</dbReference>
<dbReference type="Pfam" id="PF09190">
    <property type="entry name" value="DALR_2"/>
    <property type="match status" value="1"/>
</dbReference>
<dbReference type="Pfam" id="PF01406">
    <property type="entry name" value="tRNA-synt_1e"/>
    <property type="match status" value="1"/>
</dbReference>
<dbReference type="PRINTS" id="PR00983">
    <property type="entry name" value="TRNASYNTHCYS"/>
</dbReference>
<dbReference type="SMART" id="SM00840">
    <property type="entry name" value="DALR_2"/>
    <property type="match status" value="1"/>
</dbReference>
<dbReference type="SUPFAM" id="SSF47323">
    <property type="entry name" value="Anticodon-binding domain of a subclass of class I aminoacyl-tRNA synthetases"/>
    <property type="match status" value="1"/>
</dbReference>
<dbReference type="SUPFAM" id="SSF52374">
    <property type="entry name" value="Nucleotidylyl transferase"/>
    <property type="match status" value="1"/>
</dbReference>
<feature type="chain" id="PRO_1000090872" description="Cysteine--tRNA ligase">
    <location>
        <begin position="1"/>
        <end position="461"/>
    </location>
</feature>
<feature type="short sequence motif" description="'HIGH' region">
    <location>
        <begin position="30"/>
        <end position="40"/>
    </location>
</feature>
<feature type="short sequence motif" description="'KMSKS' region">
    <location>
        <begin position="266"/>
        <end position="270"/>
    </location>
</feature>
<feature type="binding site" evidence="1">
    <location>
        <position position="28"/>
    </location>
    <ligand>
        <name>Zn(2+)</name>
        <dbReference type="ChEBI" id="CHEBI:29105"/>
    </ligand>
</feature>
<feature type="binding site" evidence="1">
    <location>
        <position position="209"/>
    </location>
    <ligand>
        <name>Zn(2+)</name>
        <dbReference type="ChEBI" id="CHEBI:29105"/>
    </ligand>
</feature>
<feature type="binding site" evidence="1">
    <location>
        <position position="234"/>
    </location>
    <ligand>
        <name>Zn(2+)</name>
        <dbReference type="ChEBI" id="CHEBI:29105"/>
    </ligand>
</feature>
<feature type="binding site" evidence="1">
    <location>
        <position position="238"/>
    </location>
    <ligand>
        <name>Zn(2+)</name>
        <dbReference type="ChEBI" id="CHEBI:29105"/>
    </ligand>
</feature>
<feature type="binding site" evidence="1">
    <location>
        <position position="269"/>
    </location>
    <ligand>
        <name>ATP</name>
        <dbReference type="ChEBI" id="CHEBI:30616"/>
    </ligand>
</feature>
<comment type="catalytic activity">
    <reaction evidence="1">
        <text>tRNA(Cys) + L-cysteine + ATP = L-cysteinyl-tRNA(Cys) + AMP + diphosphate</text>
        <dbReference type="Rhea" id="RHEA:17773"/>
        <dbReference type="Rhea" id="RHEA-COMP:9661"/>
        <dbReference type="Rhea" id="RHEA-COMP:9679"/>
        <dbReference type="ChEBI" id="CHEBI:30616"/>
        <dbReference type="ChEBI" id="CHEBI:33019"/>
        <dbReference type="ChEBI" id="CHEBI:35235"/>
        <dbReference type="ChEBI" id="CHEBI:78442"/>
        <dbReference type="ChEBI" id="CHEBI:78517"/>
        <dbReference type="ChEBI" id="CHEBI:456215"/>
        <dbReference type="EC" id="6.1.1.16"/>
    </reaction>
</comment>
<comment type="cofactor">
    <cofactor evidence="1">
        <name>Zn(2+)</name>
        <dbReference type="ChEBI" id="CHEBI:29105"/>
    </cofactor>
    <text evidence="1">Binds 1 zinc ion per subunit.</text>
</comment>
<comment type="subunit">
    <text evidence="1">Monomer.</text>
</comment>
<comment type="subcellular location">
    <subcellularLocation>
        <location evidence="1">Cytoplasm</location>
    </subcellularLocation>
</comment>
<comment type="similarity">
    <text evidence="1">Belongs to the class-I aminoacyl-tRNA synthetase family.</text>
</comment>